<keyword id="KW-0997">Cell inner membrane</keyword>
<keyword id="KW-1003">Cell membrane</keyword>
<keyword id="KW-0472">Membrane</keyword>
<keyword id="KW-0653">Protein transport</keyword>
<keyword id="KW-0811">Translocation</keyword>
<keyword id="KW-0812">Transmembrane</keyword>
<keyword id="KW-1133">Transmembrane helix</keyword>
<keyword id="KW-0813">Transport</keyword>
<feature type="chain" id="PRO_0000097025" description="Sec translocon accessory complex subunit YajC">
    <location>
        <begin position="1"/>
        <end position="113"/>
    </location>
</feature>
<feature type="transmembrane region" description="Helical" evidence="2">
    <location>
        <begin position="18"/>
        <end position="38"/>
    </location>
</feature>
<protein>
    <recommendedName>
        <fullName>Sec translocon accessory complex subunit YajC</fullName>
    </recommendedName>
    <alternativeName>
        <fullName>Immunogenic membrane protein YajC</fullName>
    </alternativeName>
</protein>
<comment type="function">
    <text evidence="1">The SecYEG-SecDF-YajC-YidC holo-translocon (HTL) protein secretase/insertase is a supercomplex required for protein secretion, insertion of proteins into membranes, and assembly of membrane protein complexes. While the SecYEG complex is essential for assembly of a number of proteins and complexes, the SecDF-YajC-YidC subcomplex facilitates these functions.</text>
</comment>
<comment type="subunit">
    <text evidence="1">Part of the SecDF-YidC-YajC translocase complex. The SecDF-YidC-YajC translocase forms a supercomplex with SecYEG, called the holo-translocon (HTL).</text>
</comment>
<comment type="subcellular location">
    <subcellularLocation>
        <location evidence="1">Cell inner membrane</location>
        <topology evidence="1">Single-pass membrane protein</topology>
    </subcellularLocation>
</comment>
<comment type="similarity">
    <text evidence="3">Belongs to the YajC family.</text>
</comment>
<gene>
    <name type="primary">yajC</name>
    <name type="ordered locus">BR0890</name>
    <name type="ordered locus">BS1330_I0886</name>
</gene>
<name>YAJC_BRUSU</name>
<proteinExistence type="inferred from homology"/>
<reference key="1">
    <citation type="journal article" date="2002" name="Proc. Natl. Acad. Sci. U.S.A.">
        <title>The Brucella suis genome reveals fundamental similarities between animal and plant pathogens and symbionts.</title>
        <authorList>
            <person name="Paulsen I.T."/>
            <person name="Seshadri R."/>
            <person name="Nelson K.E."/>
            <person name="Eisen J.A."/>
            <person name="Heidelberg J.F."/>
            <person name="Read T.D."/>
            <person name="Dodson R.J."/>
            <person name="Umayam L.A."/>
            <person name="Brinkac L.M."/>
            <person name="Beanan M.J."/>
            <person name="Daugherty S.C."/>
            <person name="DeBoy R.T."/>
            <person name="Durkin A.S."/>
            <person name="Kolonay J.F."/>
            <person name="Madupu R."/>
            <person name="Nelson W.C."/>
            <person name="Ayodeji B."/>
            <person name="Kraul M."/>
            <person name="Shetty J."/>
            <person name="Malek J.A."/>
            <person name="Van Aken S.E."/>
            <person name="Riedmuller S."/>
            <person name="Tettelin H."/>
            <person name="Gill S.R."/>
            <person name="White O."/>
            <person name="Salzberg S.L."/>
            <person name="Hoover D.L."/>
            <person name="Lindler L.E."/>
            <person name="Halling S.M."/>
            <person name="Boyle S.M."/>
            <person name="Fraser C.M."/>
        </authorList>
    </citation>
    <scope>NUCLEOTIDE SEQUENCE [LARGE SCALE GENOMIC DNA]</scope>
    <source>
        <strain>1330</strain>
    </source>
</reference>
<reference key="2">
    <citation type="journal article" date="2011" name="J. Bacteriol.">
        <title>Revised genome sequence of Brucella suis 1330.</title>
        <authorList>
            <person name="Tae H."/>
            <person name="Shallom S."/>
            <person name="Settlage R."/>
            <person name="Preston D."/>
            <person name="Adams L.G."/>
            <person name="Garner H.R."/>
        </authorList>
    </citation>
    <scope>NUCLEOTIDE SEQUENCE [LARGE SCALE GENOMIC DNA]</scope>
    <source>
        <strain>1330</strain>
    </source>
</reference>
<sequence>MFVTPAFAQASGSVVGPDMLMSILPFILIFVIMYFLIIRPQRTQMKKRQEMLNSVRRGDTVVTGGGIVGKVLKVVDDNELELEIADGVRIRVVRATLMDVRVKGEPVADNKNK</sequence>
<dbReference type="EMBL" id="AE014291">
    <property type="protein sequence ID" value="AAN29818.1"/>
    <property type="molecule type" value="Genomic_DNA"/>
</dbReference>
<dbReference type="EMBL" id="CP002997">
    <property type="protein sequence ID" value="AEM18235.1"/>
    <property type="molecule type" value="Genomic_DNA"/>
</dbReference>
<dbReference type="RefSeq" id="WP_002964021.1">
    <property type="nucleotide sequence ID" value="NZ_KN046804.1"/>
</dbReference>
<dbReference type="SMR" id="P0A4Q2"/>
<dbReference type="GeneID" id="93016732"/>
<dbReference type="KEGG" id="bms:BR0890"/>
<dbReference type="KEGG" id="bsi:BS1330_I0886"/>
<dbReference type="PATRIC" id="fig|204722.21.peg.2699"/>
<dbReference type="HOGENOM" id="CLU_116157_2_0_5"/>
<dbReference type="PhylomeDB" id="P0A4Q2"/>
<dbReference type="Proteomes" id="UP000007104">
    <property type="component" value="Chromosome I"/>
</dbReference>
<dbReference type="GO" id="GO:0005886">
    <property type="term" value="C:plasma membrane"/>
    <property type="evidence" value="ECO:0007669"/>
    <property type="project" value="UniProtKB-SubCell"/>
</dbReference>
<dbReference type="GO" id="GO:0015031">
    <property type="term" value="P:protein transport"/>
    <property type="evidence" value="ECO:0007669"/>
    <property type="project" value="UniProtKB-KW"/>
</dbReference>
<dbReference type="InterPro" id="IPR003849">
    <property type="entry name" value="Preprotein_translocase_YajC"/>
</dbReference>
<dbReference type="NCBIfam" id="TIGR00739">
    <property type="entry name" value="yajC"/>
    <property type="match status" value="1"/>
</dbReference>
<dbReference type="PANTHER" id="PTHR33909">
    <property type="entry name" value="SEC TRANSLOCON ACCESSORY COMPLEX SUBUNIT YAJC"/>
    <property type="match status" value="1"/>
</dbReference>
<dbReference type="PANTHER" id="PTHR33909:SF1">
    <property type="entry name" value="SEC TRANSLOCON ACCESSORY COMPLEX SUBUNIT YAJC"/>
    <property type="match status" value="1"/>
</dbReference>
<dbReference type="Pfam" id="PF02699">
    <property type="entry name" value="YajC"/>
    <property type="match status" value="1"/>
</dbReference>
<dbReference type="PRINTS" id="PR01853">
    <property type="entry name" value="YAJCTRNLCASE"/>
</dbReference>
<dbReference type="SMART" id="SM01323">
    <property type="entry name" value="YajC"/>
    <property type="match status" value="1"/>
</dbReference>
<organism>
    <name type="scientific">Brucella suis biovar 1 (strain 1330)</name>
    <dbReference type="NCBI Taxonomy" id="204722"/>
    <lineage>
        <taxon>Bacteria</taxon>
        <taxon>Pseudomonadati</taxon>
        <taxon>Pseudomonadota</taxon>
        <taxon>Alphaproteobacteria</taxon>
        <taxon>Hyphomicrobiales</taxon>
        <taxon>Brucellaceae</taxon>
        <taxon>Brucella/Ochrobactrum group</taxon>
        <taxon>Brucella</taxon>
    </lineage>
</organism>
<evidence type="ECO:0000250" key="1">
    <source>
        <dbReference type="UniProtKB" id="P0ADZ7"/>
    </source>
</evidence>
<evidence type="ECO:0000255" key="2"/>
<evidence type="ECO:0000305" key="3"/>
<accession>P0A4Q2</accession>
<accession>G0K9B8</accession>
<accession>Q9ZG87</accession>